<gene>
    <name evidence="1" type="primary">rnc</name>
    <name type="ordered locus">SA1076</name>
</gene>
<sequence>MSKQKKSEIVNRFRKRFDTKMTELGFTYQNIDLYQQAFSHSSFINDFNMNRLDHNERLEFLGDAVLELTVSRYLFDKHPNLPEGNLTKMRATIVCEPSLVIFANKIGLNEMILLGKGEEKTGGRTRPSLISDAFEAFIGALYLDQGLDIVWKFAEKVIFPHVEQNELLGVVDFKTQFQEYVHQQNKGDVTYNLIKEEGPAHHRLFTSEVILQGEAIAEGKGKTKKESEQRAAESAYKQLKQIK</sequence>
<name>RNC_STAAN</name>
<reference key="1">
    <citation type="journal article" date="2001" name="Lancet">
        <title>Whole genome sequencing of meticillin-resistant Staphylococcus aureus.</title>
        <authorList>
            <person name="Kuroda M."/>
            <person name="Ohta T."/>
            <person name="Uchiyama I."/>
            <person name="Baba T."/>
            <person name="Yuzawa H."/>
            <person name="Kobayashi I."/>
            <person name="Cui L."/>
            <person name="Oguchi A."/>
            <person name="Aoki K."/>
            <person name="Nagai Y."/>
            <person name="Lian J.-Q."/>
            <person name="Ito T."/>
            <person name="Kanamori M."/>
            <person name="Matsumaru H."/>
            <person name="Maruyama A."/>
            <person name="Murakami H."/>
            <person name="Hosoyama A."/>
            <person name="Mizutani-Ui Y."/>
            <person name="Takahashi N.K."/>
            <person name="Sawano T."/>
            <person name="Inoue R."/>
            <person name="Kaito C."/>
            <person name="Sekimizu K."/>
            <person name="Hirakawa H."/>
            <person name="Kuhara S."/>
            <person name="Goto S."/>
            <person name="Yabuzaki J."/>
            <person name="Kanehisa M."/>
            <person name="Yamashita A."/>
            <person name="Oshima K."/>
            <person name="Furuya K."/>
            <person name="Yoshino C."/>
            <person name="Shiba T."/>
            <person name="Hattori M."/>
            <person name="Ogasawara N."/>
            <person name="Hayashi H."/>
            <person name="Hiramatsu K."/>
        </authorList>
    </citation>
    <scope>NUCLEOTIDE SEQUENCE [LARGE SCALE GENOMIC DNA]</scope>
    <source>
        <strain>N315</strain>
    </source>
</reference>
<reference key="2">
    <citation type="submission" date="2007-10" db="UniProtKB">
        <title>Shotgun proteomic analysis of total and membrane protein extracts of S. aureus strain N315.</title>
        <authorList>
            <person name="Vaezzadeh A.R."/>
            <person name="Deshusses J."/>
            <person name="Lescuyer P."/>
            <person name="Hochstrasser D.F."/>
        </authorList>
    </citation>
    <scope>IDENTIFICATION BY MASS SPECTROMETRY [LARGE SCALE ANALYSIS]</scope>
    <source>
        <strain>N315</strain>
    </source>
</reference>
<feature type="chain" id="PRO_0000180434" description="Ribonuclease 3">
    <location>
        <begin position="1"/>
        <end position="243"/>
    </location>
</feature>
<feature type="domain" description="RNase III" evidence="1">
    <location>
        <begin position="10"/>
        <end position="146"/>
    </location>
</feature>
<feature type="domain" description="DRBM" evidence="1">
    <location>
        <begin position="172"/>
        <end position="241"/>
    </location>
</feature>
<feature type="region of interest" description="Disordered" evidence="2">
    <location>
        <begin position="219"/>
        <end position="243"/>
    </location>
</feature>
<feature type="compositionally biased region" description="Basic and acidic residues" evidence="2">
    <location>
        <begin position="219"/>
        <end position="231"/>
    </location>
</feature>
<feature type="active site" evidence="1">
    <location>
        <position position="63"/>
    </location>
</feature>
<feature type="active site" evidence="1">
    <location>
        <position position="135"/>
    </location>
</feature>
<feature type="binding site" evidence="1">
    <location>
        <position position="59"/>
    </location>
    <ligand>
        <name>Mg(2+)</name>
        <dbReference type="ChEBI" id="CHEBI:18420"/>
    </ligand>
</feature>
<feature type="binding site" evidence="1">
    <location>
        <position position="132"/>
    </location>
    <ligand>
        <name>Mg(2+)</name>
        <dbReference type="ChEBI" id="CHEBI:18420"/>
    </ligand>
</feature>
<feature type="binding site" evidence="1">
    <location>
        <position position="135"/>
    </location>
    <ligand>
        <name>Mg(2+)</name>
        <dbReference type="ChEBI" id="CHEBI:18420"/>
    </ligand>
</feature>
<accession>P66668</accession>
<accession>Q99UN7</accession>
<proteinExistence type="evidence at protein level"/>
<evidence type="ECO:0000255" key="1">
    <source>
        <dbReference type="HAMAP-Rule" id="MF_00104"/>
    </source>
</evidence>
<evidence type="ECO:0000256" key="2">
    <source>
        <dbReference type="SAM" id="MobiDB-lite"/>
    </source>
</evidence>
<keyword id="KW-0963">Cytoplasm</keyword>
<keyword id="KW-0255">Endonuclease</keyword>
<keyword id="KW-0378">Hydrolase</keyword>
<keyword id="KW-0460">Magnesium</keyword>
<keyword id="KW-0479">Metal-binding</keyword>
<keyword id="KW-0507">mRNA processing</keyword>
<keyword id="KW-0540">Nuclease</keyword>
<keyword id="KW-0694">RNA-binding</keyword>
<keyword id="KW-0698">rRNA processing</keyword>
<keyword id="KW-0699">rRNA-binding</keyword>
<keyword id="KW-0819">tRNA processing</keyword>
<protein>
    <recommendedName>
        <fullName evidence="1">Ribonuclease 3</fullName>
        <ecNumber evidence="1">3.1.26.3</ecNumber>
    </recommendedName>
    <alternativeName>
        <fullName evidence="1">Ribonuclease III</fullName>
        <shortName evidence="1">RNase III</shortName>
    </alternativeName>
</protein>
<dbReference type="EC" id="3.1.26.3" evidence="1"/>
<dbReference type="EMBL" id="BA000018">
    <property type="protein sequence ID" value="BAB42328.1"/>
    <property type="molecule type" value="Genomic_DNA"/>
</dbReference>
<dbReference type="PIR" id="D89896">
    <property type="entry name" value="D89896"/>
</dbReference>
<dbReference type="RefSeq" id="WP_000043237.1">
    <property type="nucleotide sequence ID" value="NC_002745.2"/>
</dbReference>
<dbReference type="SMR" id="P66668"/>
<dbReference type="EnsemblBacteria" id="BAB42328">
    <property type="protein sequence ID" value="BAB42328"/>
    <property type="gene ID" value="BAB42328"/>
</dbReference>
<dbReference type="KEGG" id="sau:SA1076"/>
<dbReference type="HOGENOM" id="CLU_000907_1_3_9"/>
<dbReference type="GO" id="GO:0005737">
    <property type="term" value="C:cytoplasm"/>
    <property type="evidence" value="ECO:0007669"/>
    <property type="project" value="UniProtKB-SubCell"/>
</dbReference>
<dbReference type="GO" id="GO:0003725">
    <property type="term" value="F:double-stranded RNA binding"/>
    <property type="evidence" value="ECO:0007669"/>
    <property type="project" value="TreeGrafter"/>
</dbReference>
<dbReference type="GO" id="GO:0046872">
    <property type="term" value="F:metal ion binding"/>
    <property type="evidence" value="ECO:0007669"/>
    <property type="project" value="UniProtKB-KW"/>
</dbReference>
<dbReference type="GO" id="GO:0004525">
    <property type="term" value="F:ribonuclease III activity"/>
    <property type="evidence" value="ECO:0007669"/>
    <property type="project" value="UniProtKB-UniRule"/>
</dbReference>
<dbReference type="GO" id="GO:0019843">
    <property type="term" value="F:rRNA binding"/>
    <property type="evidence" value="ECO:0007669"/>
    <property type="project" value="UniProtKB-KW"/>
</dbReference>
<dbReference type="GO" id="GO:0006397">
    <property type="term" value="P:mRNA processing"/>
    <property type="evidence" value="ECO:0007669"/>
    <property type="project" value="UniProtKB-UniRule"/>
</dbReference>
<dbReference type="GO" id="GO:0010468">
    <property type="term" value="P:regulation of gene expression"/>
    <property type="evidence" value="ECO:0007669"/>
    <property type="project" value="TreeGrafter"/>
</dbReference>
<dbReference type="GO" id="GO:0006364">
    <property type="term" value="P:rRNA processing"/>
    <property type="evidence" value="ECO:0007669"/>
    <property type="project" value="UniProtKB-UniRule"/>
</dbReference>
<dbReference type="GO" id="GO:0008033">
    <property type="term" value="P:tRNA processing"/>
    <property type="evidence" value="ECO:0007669"/>
    <property type="project" value="UniProtKB-KW"/>
</dbReference>
<dbReference type="CDD" id="cd10845">
    <property type="entry name" value="DSRM_RNAse_III_family"/>
    <property type="match status" value="1"/>
</dbReference>
<dbReference type="CDD" id="cd00593">
    <property type="entry name" value="RIBOc"/>
    <property type="match status" value="1"/>
</dbReference>
<dbReference type="FunFam" id="1.10.1520.10:FF:000001">
    <property type="entry name" value="Ribonuclease 3"/>
    <property type="match status" value="1"/>
</dbReference>
<dbReference type="FunFam" id="3.30.160.20:FF:000003">
    <property type="entry name" value="Ribonuclease 3"/>
    <property type="match status" value="1"/>
</dbReference>
<dbReference type="Gene3D" id="3.30.160.20">
    <property type="match status" value="1"/>
</dbReference>
<dbReference type="Gene3D" id="1.10.1520.10">
    <property type="entry name" value="Ribonuclease III domain"/>
    <property type="match status" value="1"/>
</dbReference>
<dbReference type="HAMAP" id="MF_00104">
    <property type="entry name" value="RNase_III"/>
    <property type="match status" value="1"/>
</dbReference>
<dbReference type="InterPro" id="IPR014720">
    <property type="entry name" value="dsRBD_dom"/>
</dbReference>
<dbReference type="InterPro" id="IPR011907">
    <property type="entry name" value="RNase_III"/>
</dbReference>
<dbReference type="InterPro" id="IPR000999">
    <property type="entry name" value="RNase_III_dom"/>
</dbReference>
<dbReference type="InterPro" id="IPR036389">
    <property type="entry name" value="RNase_III_sf"/>
</dbReference>
<dbReference type="NCBIfam" id="TIGR02191">
    <property type="entry name" value="RNaseIII"/>
    <property type="match status" value="1"/>
</dbReference>
<dbReference type="PANTHER" id="PTHR11207:SF0">
    <property type="entry name" value="RIBONUCLEASE 3"/>
    <property type="match status" value="1"/>
</dbReference>
<dbReference type="PANTHER" id="PTHR11207">
    <property type="entry name" value="RIBONUCLEASE III"/>
    <property type="match status" value="1"/>
</dbReference>
<dbReference type="Pfam" id="PF00035">
    <property type="entry name" value="dsrm"/>
    <property type="match status" value="1"/>
</dbReference>
<dbReference type="Pfam" id="PF14622">
    <property type="entry name" value="Ribonucleas_3_3"/>
    <property type="match status" value="1"/>
</dbReference>
<dbReference type="SMART" id="SM00358">
    <property type="entry name" value="DSRM"/>
    <property type="match status" value="1"/>
</dbReference>
<dbReference type="SMART" id="SM00535">
    <property type="entry name" value="RIBOc"/>
    <property type="match status" value="1"/>
</dbReference>
<dbReference type="SUPFAM" id="SSF54768">
    <property type="entry name" value="dsRNA-binding domain-like"/>
    <property type="match status" value="1"/>
</dbReference>
<dbReference type="SUPFAM" id="SSF69065">
    <property type="entry name" value="RNase III domain-like"/>
    <property type="match status" value="1"/>
</dbReference>
<dbReference type="PROSITE" id="PS50137">
    <property type="entry name" value="DS_RBD"/>
    <property type="match status" value="1"/>
</dbReference>
<dbReference type="PROSITE" id="PS00517">
    <property type="entry name" value="RNASE_3_1"/>
    <property type="match status" value="1"/>
</dbReference>
<dbReference type="PROSITE" id="PS50142">
    <property type="entry name" value="RNASE_3_2"/>
    <property type="match status" value="1"/>
</dbReference>
<comment type="function">
    <text evidence="1">Digests double-stranded RNA. Involved in the processing of primary rRNA transcript to yield the immediate precursors to the large and small rRNAs (23S and 16S). Processes some mRNAs, and tRNAs when they are encoded in the rRNA operon. Processes pre-crRNA and tracrRNA of type II CRISPR loci if present in the organism.</text>
</comment>
<comment type="catalytic activity">
    <reaction evidence="1">
        <text>Endonucleolytic cleavage to 5'-phosphomonoester.</text>
        <dbReference type="EC" id="3.1.26.3"/>
    </reaction>
</comment>
<comment type="cofactor">
    <cofactor evidence="1">
        <name>Mg(2+)</name>
        <dbReference type="ChEBI" id="CHEBI:18420"/>
    </cofactor>
</comment>
<comment type="subunit">
    <text evidence="1">Homodimer.</text>
</comment>
<comment type="subcellular location">
    <subcellularLocation>
        <location evidence="1">Cytoplasm</location>
    </subcellularLocation>
</comment>
<comment type="similarity">
    <text evidence="1">Belongs to the ribonuclease III family.</text>
</comment>
<organism>
    <name type="scientific">Staphylococcus aureus (strain N315)</name>
    <dbReference type="NCBI Taxonomy" id="158879"/>
    <lineage>
        <taxon>Bacteria</taxon>
        <taxon>Bacillati</taxon>
        <taxon>Bacillota</taxon>
        <taxon>Bacilli</taxon>
        <taxon>Bacillales</taxon>
        <taxon>Staphylococcaceae</taxon>
        <taxon>Staphylococcus</taxon>
    </lineage>
</organism>